<proteinExistence type="inferred from homology"/>
<dbReference type="EMBL" id="CP000312">
    <property type="protein sequence ID" value="ABG87155.1"/>
    <property type="molecule type" value="Genomic_DNA"/>
</dbReference>
<dbReference type="RefSeq" id="WP_011592077.1">
    <property type="nucleotide sequence ID" value="NC_008262.1"/>
</dbReference>
<dbReference type="KEGG" id="cpr:CPR_1046"/>
<dbReference type="Proteomes" id="UP000001824">
    <property type="component" value="Chromosome"/>
</dbReference>
<dbReference type="GO" id="GO:0005886">
    <property type="term" value="C:plasma membrane"/>
    <property type="evidence" value="ECO:0007669"/>
    <property type="project" value="UniProtKB-SubCell"/>
</dbReference>
<dbReference type="GO" id="GO:0015079">
    <property type="term" value="F:potassium ion transmembrane transporter activity"/>
    <property type="evidence" value="ECO:0007669"/>
    <property type="project" value="UniProtKB-UniRule"/>
</dbReference>
<dbReference type="GO" id="GO:0015293">
    <property type="term" value="F:symporter activity"/>
    <property type="evidence" value="ECO:0007669"/>
    <property type="project" value="UniProtKB-UniRule"/>
</dbReference>
<dbReference type="HAMAP" id="MF_01522">
    <property type="entry name" value="Kup"/>
    <property type="match status" value="1"/>
</dbReference>
<dbReference type="InterPro" id="IPR003855">
    <property type="entry name" value="K+_transporter"/>
</dbReference>
<dbReference type="InterPro" id="IPR053952">
    <property type="entry name" value="K_trans_C"/>
</dbReference>
<dbReference type="InterPro" id="IPR053951">
    <property type="entry name" value="K_trans_N"/>
</dbReference>
<dbReference type="InterPro" id="IPR023051">
    <property type="entry name" value="Kup"/>
</dbReference>
<dbReference type="PANTHER" id="PTHR30540:SF83">
    <property type="entry name" value="K+ POTASSIUM TRANSPORTER"/>
    <property type="match status" value="1"/>
</dbReference>
<dbReference type="PANTHER" id="PTHR30540">
    <property type="entry name" value="OSMOTIC STRESS POTASSIUM TRANSPORTER"/>
    <property type="match status" value="1"/>
</dbReference>
<dbReference type="Pfam" id="PF02705">
    <property type="entry name" value="K_trans"/>
    <property type="match status" value="1"/>
</dbReference>
<dbReference type="Pfam" id="PF22776">
    <property type="entry name" value="K_trans_C"/>
    <property type="match status" value="1"/>
</dbReference>
<reference key="1">
    <citation type="journal article" date="2006" name="Genome Res.">
        <title>Skewed genomic variability in strains of the toxigenic bacterial pathogen, Clostridium perfringens.</title>
        <authorList>
            <person name="Myers G.S.A."/>
            <person name="Rasko D.A."/>
            <person name="Cheung J.K."/>
            <person name="Ravel J."/>
            <person name="Seshadri R."/>
            <person name="DeBoy R.T."/>
            <person name="Ren Q."/>
            <person name="Varga J."/>
            <person name="Awad M.M."/>
            <person name="Brinkac L.M."/>
            <person name="Daugherty S.C."/>
            <person name="Haft D.H."/>
            <person name="Dodson R.J."/>
            <person name="Madupu R."/>
            <person name="Nelson W.C."/>
            <person name="Rosovitz M.J."/>
            <person name="Sullivan S.A."/>
            <person name="Khouri H."/>
            <person name="Dimitrov G.I."/>
            <person name="Watkins K.L."/>
            <person name="Mulligan S."/>
            <person name="Benton J."/>
            <person name="Radune D."/>
            <person name="Fisher D.J."/>
            <person name="Atkins H.S."/>
            <person name="Hiscox T."/>
            <person name="Jost B.H."/>
            <person name="Billington S.J."/>
            <person name="Songer J.G."/>
            <person name="McClane B.A."/>
            <person name="Titball R.W."/>
            <person name="Rood J.I."/>
            <person name="Melville S.B."/>
            <person name="Paulsen I.T."/>
        </authorList>
    </citation>
    <scope>NUCLEOTIDE SEQUENCE [LARGE SCALE GENOMIC DNA]</scope>
    <source>
        <strain>SM101 / Type A</strain>
    </source>
</reference>
<sequence>MSTNKSSIEKITLGSFLIALGVVYGDIGTSPLYVMKSIINGNGGLESITPDFILGVLSLIFWTMTLLTTIKYVLITLKADNKGEGGIFSLYTLIRRRAKWLIIPAMVGGSALLADGMLTPAVTVTSSIEGLKILPSFNDIFGNNQDIIIIIVLVILSFLFFIQHFGTEIIGKIFGPVMFIWFAFLAILGIVNLSGNLYLLKALSPHYAIKILFSPNNHLGFFILGGVFLSTTGAEALYSDLGHVGRKNIYLTWPLVKICLLLNYFGQAAWILSQKNNAKLYGIESLNPFFQMMPSWLLLFGVLISTLAAIIASQALISGSYTLVSEAIKLNLFPRLQCLYPSNSKGQIYMPAINRILWIACIAIVLYFRSSDNMEAAYGLSITVTMLMTSILLFNYLLKRKTPLPIALIILVFFSSLEFSFLISSAVKFEKGGFVSVLIALCILSIMYIWIKGHYIKMSLLDYIPIENYKNQLKELKNDVDRPKYATNLVYLTSSEKSKRIERKIMYSILDKRPKRADVYWFVNVIVTDEPYTSEYTVNTFGTDYMVKVQLKLGFRVNQKLNVFLRQIVCELINNGDIKVQNKKYTTLHNRNVGDFRFILINECLSSESKLESWNSIIIRSKLFIKKFTVSPAKWFGLESSEIEVENVPLILGSTRM</sequence>
<gene>
    <name evidence="1" type="primary">kup</name>
    <name type="ordered locus">CPR_1046</name>
</gene>
<comment type="function">
    <text evidence="1">Transport of potassium into the cell. Likely operates as a K(+):H(+) symporter.</text>
</comment>
<comment type="catalytic activity">
    <reaction evidence="1">
        <text>K(+)(in) + H(+)(in) = K(+)(out) + H(+)(out)</text>
        <dbReference type="Rhea" id="RHEA:28490"/>
        <dbReference type="ChEBI" id="CHEBI:15378"/>
        <dbReference type="ChEBI" id="CHEBI:29103"/>
    </reaction>
    <physiologicalReaction direction="right-to-left" evidence="1">
        <dbReference type="Rhea" id="RHEA:28492"/>
    </physiologicalReaction>
</comment>
<comment type="subcellular location">
    <subcellularLocation>
        <location evidence="1">Cell membrane</location>
        <topology evidence="1">Multi-pass membrane protein</topology>
    </subcellularLocation>
</comment>
<comment type="similarity">
    <text evidence="1">Belongs to the HAK/KUP transporter (TC 2.A.72) family.</text>
</comment>
<name>KUP_CLOPS</name>
<accession>Q0SU39</accession>
<feature type="chain" id="PRO_0000279779" description="Probable potassium transport system protein Kup">
    <location>
        <begin position="1"/>
        <end position="657"/>
    </location>
</feature>
<feature type="transmembrane region" description="Helical" evidence="1">
    <location>
        <begin position="15"/>
        <end position="35"/>
    </location>
</feature>
<feature type="transmembrane region" description="Helical" evidence="1">
    <location>
        <begin position="48"/>
        <end position="68"/>
    </location>
</feature>
<feature type="transmembrane region" description="Helical" evidence="1">
    <location>
        <begin position="100"/>
        <end position="120"/>
    </location>
</feature>
<feature type="transmembrane region" description="Helical" evidence="1">
    <location>
        <begin position="147"/>
        <end position="167"/>
    </location>
</feature>
<feature type="transmembrane region" description="Helical" evidence="1">
    <location>
        <begin position="173"/>
        <end position="193"/>
    </location>
</feature>
<feature type="transmembrane region" description="Helical" evidence="1">
    <location>
        <begin position="219"/>
        <end position="239"/>
    </location>
</feature>
<feature type="transmembrane region" description="Helical" evidence="1">
    <location>
        <begin position="251"/>
        <end position="271"/>
    </location>
</feature>
<feature type="transmembrane region" description="Helical" evidence="1">
    <location>
        <begin position="292"/>
        <end position="312"/>
    </location>
</feature>
<feature type="transmembrane region" description="Helical" evidence="1">
    <location>
        <begin position="348"/>
        <end position="368"/>
    </location>
</feature>
<feature type="transmembrane region" description="Helical" evidence="1">
    <location>
        <begin position="378"/>
        <end position="398"/>
    </location>
</feature>
<feature type="transmembrane region" description="Helical" evidence="1">
    <location>
        <begin position="403"/>
        <end position="423"/>
    </location>
</feature>
<feature type="transmembrane region" description="Helical" evidence="1">
    <location>
        <begin position="431"/>
        <end position="451"/>
    </location>
</feature>
<keyword id="KW-1003">Cell membrane</keyword>
<keyword id="KW-0406">Ion transport</keyword>
<keyword id="KW-0472">Membrane</keyword>
<keyword id="KW-0630">Potassium</keyword>
<keyword id="KW-0633">Potassium transport</keyword>
<keyword id="KW-0769">Symport</keyword>
<keyword id="KW-0812">Transmembrane</keyword>
<keyword id="KW-1133">Transmembrane helix</keyword>
<keyword id="KW-0813">Transport</keyword>
<organism>
    <name type="scientific">Clostridium perfringens (strain SM101 / Type A)</name>
    <dbReference type="NCBI Taxonomy" id="289380"/>
    <lineage>
        <taxon>Bacteria</taxon>
        <taxon>Bacillati</taxon>
        <taxon>Bacillota</taxon>
        <taxon>Clostridia</taxon>
        <taxon>Eubacteriales</taxon>
        <taxon>Clostridiaceae</taxon>
        <taxon>Clostridium</taxon>
    </lineage>
</organism>
<protein>
    <recommendedName>
        <fullName evidence="1">Probable potassium transport system protein Kup</fullName>
    </recommendedName>
</protein>
<evidence type="ECO:0000255" key="1">
    <source>
        <dbReference type="HAMAP-Rule" id="MF_01522"/>
    </source>
</evidence>